<feature type="chain" id="PRO_0000340591" description="Bifunctional protein FolD 2">
    <location>
        <begin position="1"/>
        <end position="303"/>
    </location>
</feature>
<feature type="binding site" evidence="1">
    <location>
        <begin position="169"/>
        <end position="171"/>
    </location>
    <ligand>
        <name>NADP(+)</name>
        <dbReference type="ChEBI" id="CHEBI:58349"/>
    </ligand>
</feature>
<feature type="binding site" evidence="1">
    <location>
        <position position="194"/>
    </location>
    <ligand>
        <name>NADP(+)</name>
        <dbReference type="ChEBI" id="CHEBI:58349"/>
    </ligand>
</feature>
<feature type="binding site" evidence="1">
    <location>
        <position position="235"/>
    </location>
    <ligand>
        <name>NADP(+)</name>
        <dbReference type="ChEBI" id="CHEBI:58349"/>
    </ligand>
</feature>
<proteinExistence type="inferred from homology"/>
<name>FOLD2_PSEPG</name>
<keyword id="KW-0028">Amino-acid biosynthesis</keyword>
<keyword id="KW-0368">Histidine biosynthesis</keyword>
<keyword id="KW-0378">Hydrolase</keyword>
<keyword id="KW-0486">Methionine biosynthesis</keyword>
<keyword id="KW-0511">Multifunctional enzyme</keyword>
<keyword id="KW-0521">NADP</keyword>
<keyword id="KW-0554">One-carbon metabolism</keyword>
<keyword id="KW-0560">Oxidoreductase</keyword>
<keyword id="KW-0658">Purine biosynthesis</keyword>
<organism>
    <name type="scientific">Pseudomonas putida (strain GB-1)</name>
    <dbReference type="NCBI Taxonomy" id="76869"/>
    <lineage>
        <taxon>Bacteria</taxon>
        <taxon>Pseudomonadati</taxon>
        <taxon>Pseudomonadota</taxon>
        <taxon>Gammaproteobacteria</taxon>
        <taxon>Pseudomonadales</taxon>
        <taxon>Pseudomonadaceae</taxon>
        <taxon>Pseudomonas</taxon>
    </lineage>
</organism>
<protein>
    <recommendedName>
        <fullName evidence="1">Bifunctional protein FolD 2</fullName>
    </recommendedName>
    <domain>
        <recommendedName>
            <fullName evidence="1">Methylenetetrahydrofolate dehydrogenase</fullName>
            <ecNumber evidence="1">1.5.1.5</ecNumber>
        </recommendedName>
    </domain>
    <domain>
        <recommendedName>
            <fullName evidence="1">Methenyltetrahydrofolate cyclohydrolase</fullName>
            <ecNumber evidence="1">3.5.4.9</ecNumber>
        </recommendedName>
    </domain>
</protein>
<dbReference type="EC" id="1.5.1.5" evidence="1"/>
<dbReference type="EC" id="3.5.4.9" evidence="1"/>
<dbReference type="EMBL" id="CP000926">
    <property type="protein sequence ID" value="ABY98006.1"/>
    <property type="molecule type" value="Genomic_DNA"/>
</dbReference>
<dbReference type="SMR" id="B0KLM9"/>
<dbReference type="KEGG" id="ppg:PputGB1_2105"/>
<dbReference type="eggNOG" id="COG0190">
    <property type="taxonomic scope" value="Bacteria"/>
</dbReference>
<dbReference type="HOGENOM" id="CLU_034045_2_1_6"/>
<dbReference type="UniPathway" id="UPA00193"/>
<dbReference type="Proteomes" id="UP000002157">
    <property type="component" value="Chromosome"/>
</dbReference>
<dbReference type="GO" id="GO:0005829">
    <property type="term" value="C:cytosol"/>
    <property type="evidence" value="ECO:0007669"/>
    <property type="project" value="TreeGrafter"/>
</dbReference>
<dbReference type="GO" id="GO:0004477">
    <property type="term" value="F:methenyltetrahydrofolate cyclohydrolase activity"/>
    <property type="evidence" value="ECO:0007669"/>
    <property type="project" value="UniProtKB-UniRule"/>
</dbReference>
<dbReference type="GO" id="GO:0004488">
    <property type="term" value="F:methylenetetrahydrofolate dehydrogenase (NADP+) activity"/>
    <property type="evidence" value="ECO:0007669"/>
    <property type="project" value="UniProtKB-UniRule"/>
</dbReference>
<dbReference type="GO" id="GO:0000105">
    <property type="term" value="P:L-histidine biosynthetic process"/>
    <property type="evidence" value="ECO:0007669"/>
    <property type="project" value="UniProtKB-KW"/>
</dbReference>
<dbReference type="GO" id="GO:0009086">
    <property type="term" value="P:methionine biosynthetic process"/>
    <property type="evidence" value="ECO:0007669"/>
    <property type="project" value="UniProtKB-KW"/>
</dbReference>
<dbReference type="GO" id="GO:0006164">
    <property type="term" value="P:purine nucleotide biosynthetic process"/>
    <property type="evidence" value="ECO:0007669"/>
    <property type="project" value="UniProtKB-KW"/>
</dbReference>
<dbReference type="GO" id="GO:0035999">
    <property type="term" value="P:tetrahydrofolate interconversion"/>
    <property type="evidence" value="ECO:0007669"/>
    <property type="project" value="UniProtKB-UniRule"/>
</dbReference>
<dbReference type="CDD" id="cd01080">
    <property type="entry name" value="NAD_bind_m-THF_DH_Cyclohyd"/>
    <property type="match status" value="1"/>
</dbReference>
<dbReference type="FunFam" id="3.40.50.720:FF:000006">
    <property type="entry name" value="Bifunctional protein FolD"/>
    <property type="match status" value="1"/>
</dbReference>
<dbReference type="FunFam" id="3.40.50.10860:FF:000005">
    <property type="entry name" value="C-1-tetrahydrofolate synthase, cytoplasmic, putative"/>
    <property type="match status" value="1"/>
</dbReference>
<dbReference type="Gene3D" id="3.40.50.10860">
    <property type="entry name" value="Leucine Dehydrogenase, chain A, domain 1"/>
    <property type="match status" value="1"/>
</dbReference>
<dbReference type="Gene3D" id="3.40.50.720">
    <property type="entry name" value="NAD(P)-binding Rossmann-like Domain"/>
    <property type="match status" value="1"/>
</dbReference>
<dbReference type="HAMAP" id="MF_01576">
    <property type="entry name" value="THF_DHG_CYH"/>
    <property type="match status" value="1"/>
</dbReference>
<dbReference type="InterPro" id="IPR046346">
    <property type="entry name" value="Aminoacid_DH-like_N_sf"/>
</dbReference>
<dbReference type="InterPro" id="IPR036291">
    <property type="entry name" value="NAD(P)-bd_dom_sf"/>
</dbReference>
<dbReference type="InterPro" id="IPR000672">
    <property type="entry name" value="THF_DH/CycHdrlase"/>
</dbReference>
<dbReference type="InterPro" id="IPR020630">
    <property type="entry name" value="THF_DH/CycHdrlase_cat_dom"/>
</dbReference>
<dbReference type="InterPro" id="IPR020867">
    <property type="entry name" value="THF_DH/CycHdrlase_CS"/>
</dbReference>
<dbReference type="InterPro" id="IPR020631">
    <property type="entry name" value="THF_DH/CycHdrlase_NAD-bd_dom"/>
</dbReference>
<dbReference type="NCBIfam" id="NF008058">
    <property type="entry name" value="PRK10792.1"/>
    <property type="match status" value="1"/>
</dbReference>
<dbReference type="NCBIfam" id="NF010783">
    <property type="entry name" value="PRK14186.1"/>
    <property type="match status" value="1"/>
</dbReference>
<dbReference type="NCBIfam" id="NF010785">
    <property type="entry name" value="PRK14188.1"/>
    <property type="match status" value="1"/>
</dbReference>
<dbReference type="NCBIfam" id="NF010790">
    <property type="entry name" value="PRK14194.1"/>
    <property type="match status" value="1"/>
</dbReference>
<dbReference type="PANTHER" id="PTHR48099:SF5">
    <property type="entry name" value="C-1-TETRAHYDROFOLATE SYNTHASE, CYTOPLASMIC"/>
    <property type="match status" value="1"/>
</dbReference>
<dbReference type="PANTHER" id="PTHR48099">
    <property type="entry name" value="C-1-TETRAHYDROFOLATE SYNTHASE, CYTOPLASMIC-RELATED"/>
    <property type="match status" value="1"/>
</dbReference>
<dbReference type="Pfam" id="PF00763">
    <property type="entry name" value="THF_DHG_CYH"/>
    <property type="match status" value="1"/>
</dbReference>
<dbReference type="Pfam" id="PF02882">
    <property type="entry name" value="THF_DHG_CYH_C"/>
    <property type="match status" value="1"/>
</dbReference>
<dbReference type="PRINTS" id="PR00085">
    <property type="entry name" value="THFDHDRGNASE"/>
</dbReference>
<dbReference type="SUPFAM" id="SSF53223">
    <property type="entry name" value="Aminoacid dehydrogenase-like, N-terminal domain"/>
    <property type="match status" value="1"/>
</dbReference>
<dbReference type="SUPFAM" id="SSF51735">
    <property type="entry name" value="NAD(P)-binding Rossmann-fold domains"/>
    <property type="match status" value="1"/>
</dbReference>
<dbReference type="PROSITE" id="PS00767">
    <property type="entry name" value="THF_DHG_CYH_2"/>
    <property type="match status" value="1"/>
</dbReference>
<evidence type="ECO:0000255" key="1">
    <source>
        <dbReference type="HAMAP-Rule" id="MF_01576"/>
    </source>
</evidence>
<accession>B0KLM9</accession>
<sequence>MNALTSLKLIDGKATAARVLAEVREQVQELRQGGVQPGLVVVLVGADAASQVYVRNKVLRAEEVGIRSQEHRLPADTTQAHLLTLIDRLNRDPEVNGILVQLPLPAHIDEHCVLQAINPLKDVDGFHSENVGGLAQGRDVLTPCTPSGCMRLLRDACGELRGKHAVVVGRSNIVGKPMAALLLQADCTVTVVHSRSRDLPALCRQADILVAAVGKPRLIGADCLKPGAVVIDVGINRINEDGQNHLVGDVDFAAALPQVAGITPVPGGVGPMTIAYLMKNTLLALDLQQQAAHQERTACLSPC</sequence>
<comment type="function">
    <text evidence="1">Catalyzes the oxidation of 5,10-methylenetetrahydrofolate to 5,10-methenyltetrahydrofolate and then the hydrolysis of 5,10-methenyltetrahydrofolate to 10-formyltetrahydrofolate.</text>
</comment>
<comment type="catalytic activity">
    <reaction evidence="1">
        <text>(6R)-5,10-methylene-5,6,7,8-tetrahydrofolate + NADP(+) = (6R)-5,10-methenyltetrahydrofolate + NADPH</text>
        <dbReference type="Rhea" id="RHEA:22812"/>
        <dbReference type="ChEBI" id="CHEBI:15636"/>
        <dbReference type="ChEBI" id="CHEBI:57455"/>
        <dbReference type="ChEBI" id="CHEBI:57783"/>
        <dbReference type="ChEBI" id="CHEBI:58349"/>
        <dbReference type="EC" id="1.5.1.5"/>
    </reaction>
</comment>
<comment type="catalytic activity">
    <reaction evidence="1">
        <text>(6R)-5,10-methenyltetrahydrofolate + H2O = (6R)-10-formyltetrahydrofolate + H(+)</text>
        <dbReference type="Rhea" id="RHEA:23700"/>
        <dbReference type="ChEBI" id="CHEBI:15377"/>
        <dbReference type="ChEBI" id="CHEBI:15378"/>
        <dbReference type="ChEBI" id="CHEBI:57455"/>
        <dbReference type="ChEBI" id="CHEBI:195366"/>
        <dbReference type="EC" id="3.5.4.9"/>
    </reaction>
</comment>
<comment type="pathway">
    <text evidence="1">One-carbon metabolism; tetrahydrofolate interconversion.</text>
</comment>
<comment type="subunit">
    <text evidence="1">Homodimer.</text>
</comment>
<comment type="similarity">
    <text evidence="1">Belongs to the tetrahydrofolate dehydrogenase/cyclohydrolase family.</text>
</comment>
<reference key="1">
    <citation type="submission" date="2008-01" db="EMBL/GenBank/DDBJ databases">
        <title>Complete sequence of Pseudomonas putida GB-1.</title>
        <authorList>
            <consortium name="US DOE Joint Genome Institute"/>
            <person name="Copeland A."/>
            <person name="Lucas S."/>
            <person name="Lapidus A."/>
            <person name="Barry K."/>
            <person name="Glavina del Rio T."/>
            <person name="Dalin E."/>
            <person name="Tice H."/>
            <person name="Pitluck S."/>
            <person name="Bruce D."/>
            <person name="Goodwin L."/>
            <person name="Chertkov O."/>
            <person name="Brettin T."/>
            <person name="Detter J.C."/>
            <person name="Han C."/>
            <person name="Kuske C.R."/>
            <person name="Schmutz J."/>
            <person name="Larimer F."/>
            <person name="Land M."/>
            <person name="Hauser L."/>
            <person name="Kyrpides N."/>
            <person name="Kim E."/>
            <person name="McCarthy J.K."/>
            <person name="Richardson P."/>
        </authorList>
    </citation>
    <scope>NUCLEOTIDE SEQUENCE [LARGE SCALE GENOMIC DNA]</scope>
    <source>
        <strain>GB-1</strain>
    </source>
</reference>
<gene>
    <name evidence="1" type="primary">folD2</name>
    <name type="ordered locus">PputGB1_2105</name>
</gene>